<proteinExistence type="evidence at transcript level"/>
<comment type="function">
    <text evidence="3 4">The small GTPases Rab are key regulators of intracellular membrane trafficking, from the formation of transport vesicles to their fusion with membranes. Rabs cycle between an inactive GDP-bound form and an active GTP-bound form that is able to recruit to membranes different sets of downstream effectors directly responsible for vesicle formation, movement, tethering and fusion. In its active state, RAB7A binds to a variety of effector proteins playing a key role in the regulation of endo-lysosomal trafficking. Governs early-to-late endosomal maturation, microtubule minus-end as well as plus-end directed endosomal migration and positioning, and endosome-lysosome transport through different protein-protein interaction cascades (By similarity). Also plays a central role in growth-factor-mediated cell signaling, nutrient-transporter-mediated nutrient uptake, neurotrophin transport in the axons of neurons and lipid metabolism (By similarity). Also involved in regulation of some specialized endosomal membrane trafficking, such as maturation of melanosomes, pathogen-induced phagosomes (or vacuoles) and autophagosomes (By similarity). Plays a role in the maturation and acidification of phagosomes that engulf pathogens, such as S.aureus and Mycobacteria (By similarity). Plays a role in the fusion of phagosomes with lysosomes (By similarity). In concert with RAC1, plays a role in regulating the formation of RBs (ruffled borders) in osteoclasts (By similarity). Controls the endosomal trafficking and neurite outgrowth signaling of NTRK1/TRKA (By similarity). Regulates the endocytic trafficking of the EGF-EGFR complex by regulating its lysosomal degradation (By similarity). Involved in the ADRB2-stimulated lipolysis through lipophagy, a cytosolic lipase-independent autophagic pathway. Required for the exosomal release of SDCBP, CD63 and syndecan (By similarity). Required for vesicular trafficking and cell surface expression of ACE2 (By similarity). May play a role in PRPH neuronal intermediate filament assembly (By similarity).</text>
</comment>
<comment type="catalytic activity">
    <reaction evidence="3">
        <text>GTP + H2O = GDP + phosphate + H(+)</text>
        <dbReference type="Rhea" id="RHEA:19669"/>
        <dbReference type="ChEBI" id="CHEBI:15377"/>
        <dbReference type="ChEBI" id="CHEBI:15378"/>
        <dbReference type="ChEBI" id="CHEBI:37565"/>
        <dbReference type="ChEBI" id="CHEBI:43474"/>
        <dbReference type="ChEBI" id="CHEBI:58189"/>
        <dbReference type="EC" id="3.6.5.2"/>
    </reaction>
    <physiologicalReaction direction="left-to-right" evidence="3">
        <dbReference type="Rhea" id="RHEA:19670"/>
    </physiologicalReaction>
</comment>
<comment type="cofactor">
    <cofactor evidence="3">
        <name>Mg(2+)</name>
        <dbReference type="ChEBI" id="CHEBI:18420"/>
    </cofactor>
</comment>
<comment type="activity regulation">
    <text evidence="3">Regulated by guanine nucleotide exchange factors (GEFs) which promote the exchange of bound GDP for free GTP. Regulated by GTPase activating proteins (GAPs) which increase the GTP hydrolysis activity. Inhibited by GDP dissociation inhibitors (GDIs).</text>
</comment>
<comment type="subunit">
    <text evidence="2 3 4">Interacts with NTRK1/TRKA (By similarity). Interacts with RILP (By similarity). Interacts with PSMA7 (By similarity). Interacts with RNF115 (By similarity). Interacts with FYCO1 (By similarity). Interacts with the PIK3C3/VPS34-PIK3R4 complex (By similarity). The GTP-bound form interacts with OSBPL1A (By similarity). The GTP-bound form interacts with RAC1 (By similarity). Interacts with CLN3 (By similarity). Interacts with CHM, the substrate-binding subunit of the Rab geranylgeranyltransferase complex (By similarity). Interacts with C9orf72. Does not interact with HPS4 and the BLOC-3 complex (heterodimer of HPS1 and HPS4). Interacts with CLN5 (By similarity). Interacts with PLEKHM1 (via N- and C-terminus) (By similarity). Interacts with PRPH; the interaction is direct (By similarity). Interacts with VPS13A (By similarity). The GDP-bound form interacts with RIMOC1 (By similarity). Interacts with the MON1A-CCZ1B complex and this interaction is enhanced in the presence of RIMOC1 (By similarity). Interacts with VPS39 and VPS41 (By similarity). Forms a ternary complex with LAMP2 and RUFY4; the interaction with LAMP2 is mediated by RUFY4 (via RUN and coiled coil domains) (By similarity).</text>
</comment>
<comment type="subcellular location">
    <subcellularLocation>
        <location evidence="3">Cytoplasmic vesicle</location>
        <location evidence="3">Phagosome membrane</location>
        <topology evidence="5">Peripheral membrane protein</topology>
        <orientation evidence="5">Cytoplasmic side</orientation>
    </subcellularLocation>
    <subcellularLocation>
        <location evidence="3">Late endosome membrane</location>
        <topology evidence="5">Peripheral membrane protein</topology>
        <orientation evidence="5">Cytoplasmic side</orientation>
    </subcellularLocation>
    <subcellularLocation>
        <location evidence="3">Lysosome membrane</location>
        <topology evidence="5">Peripheral membrane protein</topology>
        <orientation evidence="5">Cytoplasmic side</orientation>
    </subcellularLocation>
    <subcellularLocation>
        <location evidence="3">Melanosome membrane</location>
        <topology evidence="5">Peripheral membrane protein</topology>
        <orientation evidence="5">Cytoplasmic side</orientation>
    </subcellularLocation>
    <subcellularLocation>
        <location evidence="3">Cytoplasmic vesicle</location>
        <location evidence="3">Autophagosome membrane</location>
        <topology evidence="5">Peripheral membrane protein</topology>
        <orientation evidence="5">Cytoplasmic side</orientation>
    </subcellularLocation>
    <subcellularLocation>
        <location evidence="4">Lipid droplet</location>
    </subcellularLocation>
    <subcellularLocation>
        <location evidence="3">Endosome membrane</location>
    </subcellularLocation>
    <subcellularLocation>
        <location evidence="4">Cytoplasmic vesicle</location>
    </subcellularLocation>
    <subcellularLocation>
        <location evidence="3">Mitochondrion membrane</location>
        <topology evidence="5">Peripheral membrane protein</topology>
    </subcellularLocation>
    <text evidence="3 4">Colocalizes with OSBPL1A at the late endosome. Found in the ruffled border (a late endosomal-like compartment in the plasma membrane) of bone-resorbing osteoclasts. Recruited to phagosomes containing S.aureus or Mycobacterium. Lipid droplet localization is increased upon ADRB2 stimulation. Recruited to damaged mitochondria during mitophagy in a RIMOC1-dependent manner.</text>
</comment>
<comment type="domain">
    <text evidence="3">Switch I, switch II and the interswitch regions are characteristic of Rab GTPases and mediate the interactions with Rab downstream effectors. The switch regions undergo conformational changes upon nucleotide binding which drive interaction with specific sets of effector proteins, with most effectors only binding to GTP-bound Rab.</text>
</comment>
<comment type="PTM">
    <text evidence="3">Deubiquitination at Lys-191 and Lys-194 by USP32.</text>
</comment>
<comment type="PTM">
    <text evidence="3">Phosphorylated at Ser-72 by LRRK1; phosphorylation is dependent on protein kinase C (PKC) activation of LRRK1.</text>
</comment>
<comment type="PTM">
    <text evidence="3">Prenylated. Prenylation is required for association with cellular membranes.</text>
</comment>
<comment type="similarity">
    <text evidence="5">Belongs to the small GTPase superfamily. Rab family.</text>
</comment>
<reference key="1">
    <citation type="submission" date="2005-08" db="EMBL/GenBank/DDBJ databases">
        <authorList>
            <consortium name="NIH - Mammalian Gene Collection (MGC) project"/>
        </authorList>
    </citation>
    <scope>NUCLEOTIDE SEQUENCE [LARGE SCALE MRNA]</scope>
    <source>
        <strain>Crossbred X Angus</strain>
        <tissue>Ileum</tissue>
    </source>
</reference>
<gene>
    <name type="primary">RAB7A</name>
    <name type="synonym">RAB7</name>
</gene>
<sequence>MTSRKKVLLKVIILGDSGVGKTSLMNQYVNKKFSNQYKATIGADFLTKEVMVDDRLVTMQIWDTAGQERFQSLGVAFYRGADCCVLVFDVTAPNTFKTLDSWRDEFLIQASPRDPENFPFVVLGNKIDLENRQVATKRAQAWCYSKNNIPYFETSAKEAINVEQAFQTIVRNALKQETEVELYNEFPEPIKLDKNDRTKPSAEGCSC</sequence>
<dbReference type="EC" id="3.6.5.2" evidence="3"/>
<dbReference type="EMBL" id="BC102415">
    <property type="protein sequence ID" value="AAI02416.1"/>
    <property type="molecule type" value="mRNA"/>
</dbReference>
<dbReference type="RefSeq" id="NP_001030253.1">
    <property type="nucleotide sequence ID" value="NM_001035081.1"/>
</dbReference>
<dbReference type="SMR" id="Q3T0F5"/>
<dbReference type="FunCoup" id="Q3T0F5">
    <property type="interactions" value="3469"/>
</dbReference>
<dbReference type="STRING" id="9913.ENSBTAP00000061056"/>
<dbReference type="PaxDb" id="9913-ENSBTAP00000013451"/>
<dbReference type="PeptideAtlas" id="Q3T0F5"/>
<dbReference type="GeneID" id="509970"/>
<dbReference type="KEGG" id="bta:509970"/>
<dbReference type="CTD" id="7879"/>
<dbReference type="eggNOG" id="KOG0394">
    <property type="taxonomic scope" value="Eukaryota"/>
</dbReference>
<dbReference type="InParanoid" id="Q3T0F5"/>
<dbReference type="OrthoDB" id="1436450at2759"/>
<dbReference type="Proteomes" id="UP000009136">
    <property type="component" value="Unplaced"/>
</dbReference>
<dbReference type="GO" id="GO:0000421">
    <property type="term" value="C:autophagosome membrane"/>
    <property type="evidence" value="ECO:0007669"/>
    <property type="project" value="UniProtKB-SubCell"/>
</dbReference>
<dbReference type="GO" id="GO:0005829">
    <property type="term" value="C:cytosol"/>
    <property type="evidence" value="ECO:0000250"/>
    <property type="project" value="GO_Central"/>
</dbReference>
<dbReference type="GO" id="GO:0005770">
    <property type="term" value="C:late endosome"/>
    <property type="evidence" value="ECO:0000250"/>
    <property type="project" value="UniProtKB"/>
</dbReference>
<dbReference type="GO" id="GO:0031902">
    <property type="term" value="C:late endosome membrane"/>
    <property type="evidence" value="ECO:0000250"/>
    <property type="project" value="GO_Central"/>
</dbReference>
<dbReference type="GO" id="GO:0005811">
    <property type="term" value="C:lipid droplet"/>
    <property type="evidence" value="ECO:0000250"/>
    <property type="project" value="GO_Central"/>
</dbReference>
<dbReference type="GO" id="GO:0005765">
    <property type="term" value="C:lysosomal membrane"/>
    <property type="evidence" value="ECO:0007669"/>
    <property type="project" value="UniProtKB-SubCell"/>
</dbReference>
<dbReference type="GO" id="GO:0005764">
    <property type="term" value="C:lysosome"/>
    <property type="evidence" value="ECO:0000318"/>
    <property type="project" value="GO_Central"/>
</dbReference>
<dbReference type="GO" id="GO:0033162">
    <property type="term" value="C:melanosome membrane"/>
    <property type="evidence" value="ECO:0007669"/>
    <property type="project" value="UniProtKB-SubCell"/>
</dbReference>
<dbReference type="GO" id="GO:0031966">
    <property type="term" value="C:mitochondrial membrane"/>
    <property type="evidence" value="ECO:0007669"/>
    <property type="project" value="UniProtKB-SubCell"/>
</dbReference>
<dbReference type="GO" id="GO:0005739">
    <property type="term" value="C:mitochondrion"/>
    <property type="evidence" value="ECO:0000250"/>
    <property type="project" value="UniProtKB"/>
</dbReference>
<dbReference type="GO" id="GO:0045335">
    <property type="term" value="C:phagocytic vesicle"/>
    <property type="evidence" value="ECO:0000250"/>
    <property type="project" value="UniProtKB"/>
</dbReference>
<dbReference type="GO" id="GO:0030670">
    <property type="term" value="C:phagocytic vesicle membrane"/>
    <property type="evidence" value="ECO:0007669"/>
    <property type="project" value="UniProtKB-SubCell"/>
</dbReference>
<dbReference type="GO" id="GO:0003925">
    <property type="term" value="F:G protein activity"/>
    <property type="evidence" value="ECO:0007669"/>
    <property type="project" value="UniProtKB-EC"/>
</dbReference>
<dbReference type="GO" id="GO:0005525">
    <property type="term" value="F:GTP binding"/>
    <property type="evidence" value="ECO:0007669"/>
    <property type="project" value="UniProtKB-KW"/>
</dbReference>
<dbReference type="GO" id="GO:0045022">
    <property type="term" value="P:early endosome to late endosome transport"/>
    <property type="evidence" value="ECO:0000250"/>
    <property type="project" value="UniProtKB"/>
</dbReference>
<dbReference type="GO" id="GO:0008333">
    <property type="term" value="P:endosome to lysosome transport"/>
    <property type="evidence" value="ECO:0000318"/>
    <property type="project" value="GO_Central"/>
</dbReference>
<dbReference type="GO" id="GO:0099638">
    <property type="term" value="P:endosome to plasma membrane protein transport"/>
    <property type="evidence" value="ECO:0000250"/>
    <property type="project" value="UniProtKB"/>
</dbReference>
<dbReference type="GO" id="GO:0016042">
    <property type="term" value="P:lipid catabolic process"/>
    <property type="evidence" value="ECO:0007669"/>
    <property type="project" value="UniProtKB-KW"/>
</dbReference>
<dbReference type="GO" id="GO:0061724">
    <property type="term" value="P:lipophagy"/>
    <property type="evidence" value="ECO:0000250"/>
    <property type="project" value="GO_Central"/>
</dbReference>
<dbReference type="GO" id="GO:0090383">
    <property type="term" value="P:phagosome acidification"/>
    <property type="evidence" value="ECO:0000250"/>
    <property type="project" value="UniProtKB"/>
</dbReference>
<dbReference type="GO" id="GO:0090385">
    <property type="term" value="P:phagosome-lysosome fusion"/>
    <property type="evidence" value="ECO:0000250"/>
    <property type="project" value="UniProtKB"/>
</dbReference>
<dbReference type="CDD" id="cd01862">
    <property type="entry name" value="Rab7"/>
    <property type="match status" value="1"/>
</dbReference>
<dbReference type="FunFam" id="3.40.50.300:FF:000086">
    <property type="entry name" value="Ras-related small GTPase"/>
    <property type="match status" value="1"/>
</dbReference>
<dbReference type="Gene3D" id="3.40.50.300">
    <property type="entry name" value="P-loop containing nucleotide triphosphate hydrolases"/>
    <property type="match status" value="1"/>
</dbReference>
<dbReference type="InterPro" id="IPR027417">
    <property type="entry name" value="P-loop_NTPase"/>
</dbReference>
<dbReference type="InterPro" id="IPR005225">
    <property type="entry name" value="Small_GTP-bd"/>
</dbReference>
<dbReference type="InterPro" id="IPR001806">
    <property type="entry name" value="Small_GTPase"/>
</dbReference>
<dbReference type="NCBIfam" id="TIGR00231">
    <property type="entry name" value="small_GTP"/>
    <property type="match status" value="1"/>
</dbReference>
<dbReference type="PANTHER" id="PTHR47981">
    <property type="entry name" value="RAB FAMILY"/>
    <property type="match status" value="1"/>
</dbReference>
<dbReference type="PANTHER" id="PTHR47981:SF13">
    <property type="entry name" value="RAS-RELATED PROTEIN RAB-7A"/>
    <property type="match status" value="1"/>
</dbReference>
<dbReference type="Pfam" id="PF00071">
    <property type="entry name" value="Ras"/>
    <property type="match status" value="1"/>
</dbReference>
<dbReference type="PRINTS" id="PR00449">
    <property type="entry name" value="RASTRNSFRMNG"/>
</dbReference>
<dbReference type="SMART" id="SM00175">
    <property type="entry name" value="RAB"/>
    <property type="match status" value="1"/>
</dbReference>
<dbReference type="SMART" id="SM00176">
    <property type="entry name" value="RAN"/>
    <property type="match status" value="1"/>
</dbReference>
<dbReference type="SMART" id="SM00173">
    <property type="entry name" value="RAS"/>
    <property type="match status" value="1"/>
</dbReference>
<dbReference type="SMART" id="SM00174">
    <property type="entry name" value="RHO"/>
    <property type="match status" value="1"/>
</dbReference>
<dbReference type="SUPFAM" id="SSF52540">
    <property type="entry name" value="P-loop containing nucleoside triphosphate hydrolases"/>
    <property type="match status" value="1"/>
</dbReference>
<dbReference type="PROSITE" id="PS51419">
    <property type="entry name" value="RAB"/>
    <property type="match status" value="1"/>
</dbReference>
<protein>
    <recommendedName>
        <fullName>Ras-related protein Rab-7a</fullName>
        <ecNumber evidence="3">3.6.5.2</ecNumber>
    </recommendedName>
</protein>
<feature type="initiator methionine" description="Removed" evidence="3">
    <location>
        <position position="1"/>
    </location>
</feature>
<feature type="chain" id="PRO_0000239839" description="Ras-related protein Rab-7a">
    <location>
        <begin position="2"/>
        <end position="207"/>
    </location>
</feature>
<feature type="short sequence motif" description="Switch 1" evidence="3">
    <location>
        <begin position="28"/>
        <end position="41"/>
    </location>
</feature>
<feature type="short sequence motif" description="Switch 2" evidence="3">
    <location>
        <begin position="67"/>
        <end position="82"/>
    </location>
</feature>
<feature type="binding site" evidence="3">
    <location>
        <position position="17"/>
    </location>
    <ligand>
        <name>GTP</name>
        <dbReference type="ChEBI" id="CHEBI:37565"/>
    </ligand>
</feature>
<feature type="binding site" evidence="3">
    <location>
        <position position="18"/>
    </location>
    <ligand>
        <name>GTP</name>
        <dbReference type="ChEBI" id="CHEBI:37565"/>
    </ligand>
</feature>
<feature type="binding site" evidence="3">
    <location>
        <position position="19"/>
    </location>
    <ligand>
        <name>GTP</name>
        <dbReference type="ChEBI" id="CHEBI:37565"/>
    </ligand>
</feature>
<feature type="binding site" evidence="3">
    <location>
        <position position="20"/>
    </location>
    <ligand>
        <name>GTP</name>
        <dbReference type="ChEBI" id="CHEBI:37565"/>
    </ligand>
</feature>
<feature type="binding site" evidence="3">
    <location>
        <position position="21"/>
    </location>
    <ligand>
        <name>GTP</name>
        <dbReference type="ChEBI" id="CHEBI:37565"/>
    </ligand>
</feature>
<feature type="binding site" evidence="3">
    <location>
        <position position="22"/>
    </location>
    <ligand>
        <name>GTP</name>
        <dbReference type="ChEBI" id="CHEBI:37565"/>
    </ligand>
</feature>
<feature type="binding site" evidence="3">
    <location>
        <position position="22"/>
    </location>
    <ligand>
        <name>Mg(2+)</name>
        <dbReference type="ChEBI" id="CHEBI:18420"/>
    </ligand>
</feature>
<feature type="binding site" evidence="3">
    <location>
        <position position="23"/>
    </location>
    <ligand>
        <name>GTP</name>
        <dbReference type="ChEBI" id="CHEBI:37565"/>
    </ligand>
</feature>
<feature type="binding site" evidence="3">
    <location>
        <position position="34"/>
    </location>
    <ligand>
        <name>GTP</name>
        <dbReference type="ChEBI" id="CHEBI:37565"/>
    </ligand>
</feature>
<feature type="binding site" evidence="3">
    <location>
        <position position="35"/>
    </location>
    <ligand>
        <name>GTP</name>
        <dbReference type="ChEBI" id="CHEBI:37565"/>
    </ligand>
</feature>
<feature type="binding site" evidence="3">
    <location>
        <position position="37"/>
    </location>
    <ligand>
        <name>GTP</name>
        <dbReference type="ChEBI" id="CHEBI:37565"/>
    </ligand>
</feature>
<feature type="binding site" evidence="3">
    <location>
        <position position="40"/>
    </location>
    <ligand>
        <name>GTP</name>
        <dbReference type="ChEBI" id="CHEBI:37565"/>
    </ligand>
</feature>
<feature type="binding site" evidence="3">
    <location>
        <position position="40"/>
    </location>
    <ligand>
        <name>Mg(2+)</name>
        <dbReference type="ChEBI" id="CHEBI:18420"/>
    </ligand>
</feature>
<feature type="binding site" evidence="3">
    <location>
        <position position="63"/>
    </location>
    <ligand>
        <name>Mg(2+)</name>
        <dbReference type="ChEBI" id="CHEBI:18420"/>
    </ligand>
</feature>
<feature type="binding site" evidence="3">
    <location>
        <position position="66"/>
    </location>
    <ligand>
        <name>GTP</name>
        <dbReference type="ChEBI" id="CHEBI:37565"/>
    </ligand>
</feature>
<feature type="binding site" evidence="3">
    <location>
        <position position="125"/>
    </location>
    <ligand>
        <name>GTP</name>
        <dbReference type="ChEBI" id="CHEBI:37565"/>
    </ligand>
</feature>
<feature type="binding site" evidence="3">
    <location>
        <position position="126"/>
    </location>
    <ligand>
        <name>GTP</name>
        <dbReference type="ChEBI" id="CHEBI:37565"/>
    </ligand>
</feature>
<feature type="binding site" evidence="3">
    <location>
        <position position="128"/>
    </location>
    <ligand>
        <name>GTP</name>
        <dbReference type="ChEBI" id="CHEBI:37565"/>
    </ligand>
</feature>
<feature type="binding site" evidence="3">
    <location>
        <position position="156"/>
    </location>
    <ligand>
        <name>GTP</name>
        <dbReference type="ChEBI" id="CHEBI:37565"/>
    </ligand>
</feature>
<feature type="binding site" evidence="3">
    <location>
        <position position="157"/>
    </location>
    <ligand>
        <name>GTP</name>
        <dbReference type="ChEBI" id="CHEBI:37565"/>
    </ligand>
</feature>
<feature type="modified residue" description="N-acetylthreonine" evidence="3">
    <location>
        <position position="2"/>
    </location>
</feature>
<feature type="modified residue" description="Phosphoserine" evidence="3">
    <location>
        <position position="72"/>
    </location>
</feature>
<feature type="modified residue" description="Cysteine methyl ester" evidence="1">
    <location>
        <position position="207"/>
    </location>
</feature>
<feature type="lipid moiety-binding region" description="S-geranylgeranyl cysteine" evidence="1">
    <location>
        <position position="205"/>
    </location>
</feature>
<feature type="lipid moiety-binding region" description="S-geranylgeranyl cysteine" evidence="1">
    <location>
        <position position="207"/>
    </location>
</feature>
<feature type="cross-link" description="Glycyl lysine isopeptide (Lys-Gly) (interchain with G-Cter in ubiquitin)" evidence="3">
    <location>
        <position position="191"/>
    </location>
</feature>
<feature type="cross-link" description="Glycyl lysine isopeptide (Lys-Gly) (interchain with G-Cter in ubiquitin)" evidence="3">
    <location>
        <position position="194"/>
    </location>
</feature>
<evidence type="ECO:0000250" key="1"/>
<evidence type="ECO:0000250" key="2">
    <source>
        <dbReference type="UniProtKB" id="P09527"/>
    </source>
</evidence>
<evidence type="ECO:0000250" key="3">
    <source>
        <dbReference type="UniProtKB" id="P51149"/>
    </source>
</evidence>
<evidence type="ECO:0000250" key="4">
    <source>
        <dbReference type="UniProtKB" id="P51150"/>
    </source>
</evidence>
<evidence type="ECO:0000305" key="5"/>
<organism>
    <name type="scientific">Bos taurus</name>
    <name type="common">Bovine</name>
    <dbReference type="NCBI Taxonomy" id="9913"/>
    <lineage>
        <taxon>Eukaryota</taxon>
        <taxon>Metazoa</taxon>
        <taxon>Chordata</taxon>
        <taxon>Craniata</taxon>
        <taxon>Vertebrata</taxon>
        <taxon>Euteleostomi</taxon>
        <taxon>Mammalia</taxon>
        <taxon>Eutheria</taxon>
        <taxon>Laurasiatheria</taxon>
        <taxon>Artiodactyla</taxon>
        <taxon>Ruminantia</taxon>
        <taxon>Pecora</taxon>
        <taxon>Bovidae</taxon>
        <taxon>Bovinae</taxon>
        <taxon>Bos</taxon>
    </lineage>
</organism>
<accession>Q3T0F5</accession>
<name>RAB7A_BOVIN</name>
<keyword id="KW-0007">Acetylation</keyword>
<keyword id="KW-0072">Autophagy</keyword>
<keyword id="KW-0968">Cytoplasmic vesicle</keyword>
<keyword id="KW-0967">Endosome</keyword>
<keyword id="KW-0342">GTP-binding</keyword>
<keyword id="KW-0378">Hydrolase</keyword>
<keyword id="KW-1017">Isopeptide bond</keyword>
<keyword id="KW-0442">Lipid degradation</keyword>
<keyword id="KW-0551">Lipid droplet</keyword>
<keyword id="KW-0443">Lipid metabolism</keyword>
<keyword id="KW-0449">Lipoprotein</keyword>
<keyword id="KW-0458">Lysosome</keyword>
<keyword id="KW-0460">Magnesium</keyword>
<keyword id="KW-0472">Membrane</keyword>
<keyword id="KW-0479">Metal-binding</keyword>
<keyword id="KW-0488">Methylation</keyword>
<keyword id="KW-0496">Mitochondrion</keyword>
<keyword id="KW-0547">Nucleotide-binding</keyword>
<keyword id="KW-0597">Phosphoprotein</keyword>
<keyword id="KW-0636">Prenylation</keyword>
<keyword id="KW-0653">Protein transport</keyword>
<keyword id="KW-1185">Reference proteome</keyword>
<keyword id="KW-0813">Transport</keyword>
<keyword id="KW-0832">Ubl conjugation</keyword>